<organismHost>
    <name type="scientific">Homo sapiens</name>
    <name type="common">Human</name>
    <dbReference type="NCBI Taxonomy" id="9606"/>
</organismHost>
<organism>
    <name type="scientific">Human immunodeficiency virus type 1 group M subtype B (isolate YU-2)</name>
    <name type="common">HIV-1</name>
    <dbReference type="NCBI Taxonomy" id="362651"/>
    <lineage>
        <taxon>Viruses</taxon>
        <taxon>Riboviria</taxon>
        <taxon>Pararnavirae</taxon>
        <taxon>Artverviricota</taxon>
        <taxon>Revtraviricetes</taxon>
        <taxon>Ortervirales</taxon>
        <taxon>Retroviridae</taxon>
        <taxon>Orthoretrovirinae</taxon>
        <taxon>Lentivirus</taxon>
        <taxon>Human immunodeficiency virus type 1</taxon>
    </lineage>
</organism>
<evidence type="ECO:0000250" key="1"/>
<evidence type="ECO:0000250" key="2">
    <source>
        <dbReference type="UniProtKB" id="P03347"/>
    </source>
</evidence>
<evidence type="ECO:0000250" key="3">
    <source>
        <dbReference type="UniProtKB" id="P03348"/>
    </source>
</evidence>
<evidence type="ECO:0000250" key="4">
    <source>
        <dbReference type="UniProtKB" id="P03349"/>
    </source>
</evidence>
<evidence type="ECO:0000250" key="5">
    <source>
        <dbReference type="UniProtKB" id="P04591"/>
    </source>
</evidence>
<evidence type="ECO:0000250" key="6">
    <source>
        <dbReference type="UniProtKB" id="P12493"/>
    </source>
</evidence>
<evidence type="ECO:0000250" key="7">
    <source>
        <dbReference type="UniProtKB" id="P12497"/>
    </source>
</evidence>
<evidence type="ECO:0000255" key="8">
    <source>
        <dbReference type="PROSITE-ProRule" id="PRU00047"/>
    </source>
</evidence>
<evidence type="ECO:0000256" key="9">
    <source>
        <dbReference type="SAM" id="MobiDB-lite"/>
    </source>
</evidence>
<evidence type="ECO:0000305" key="10"/>
<evidence type="ECO:0007829" key="11">
    <source>
        <dbReference type="PDB" id="2R05"/>
    </source>
</evidence>
<evidence type="ECO:0007829" key="12">
    <source>
        <dbReference type="PDB" id="8D3B"/>
    </source>
</evidence>
<feature type="initiator methionine" description="Removed; by host" evidence="1">
    <location>
        <position position="1"/>
    </location>
</feature>
<feature type="chain" id="PRO_0000261238" description="Gag polyprotein">
    <location>
        <begin position="2"/>
        <end position="500"/>
    </location>
</feature>
<feature type="chain" id="PRO_0000038493" description="Matrix protein p17" evidence="1">
    <location>
        <begin position="2"/>
        <end position="132"/>
    </location>
</feature>
<feature type="chain" id="PRO_0000038494" description="Capsid protein p24" evidence="1">
    <location>
        <begin position="133"/>
        <end position="363"/>
    </location>
</feature>
<feature type="peptide" id="PRO_0000038495" description="Spacer peptide 1" evidence="1">
    <location>
        <begin position="364"/>
        <end position="377"/>
    </location>
</feature>
<feature type="chain" id="PRO_0000038496" description="Nucleocapsid protein p7" evidence="1">
    <location>
        <begin position="378"/>
        <end position="432"/>
    </location>
</feature>
<feature type="peptide" id="PRO_0000038497" description="Spacer peptide 2" evidence="1">
    <location>
        <begin position="433"/>
        <end position="448"/>
    </location>
</feature>
<feature type="chain" id="PRO_0000038498" description="p6-gag" evidence="1">
    <location>
        <begin position="449"/>
        <end position="500"/>
    </location>
</feature>
<feature type="zinc finger region" description="CCHC-type 1" evidence="8">
    <location>
        <begin position="390"/>
        <end position="407"/>
    </location>
</feature>
<feature type="zinc finger region" description="CCHC-type 2" evidence="8">
    <location>
        <begin position="411"/>
        <end position="428"/>
    </location>
</feature>
<feature type="region of interest" description="Interaction with Gp41" evidence="6">
    <location>
        <begin position="7"/>
        <end position="31"/>
    </location>
</feature>
<feature type="region of interest" description="Interaction with host CALM1" evidence="5">
    <location>
        <begin position="8"/>
        <end position="43"/>
    </location>
</feature>
<feature type="region of interest" description="Interaction with host AP3D1" evidence="7">
    <location>
        <begin position="12"/>
        <end position="19"/>
    </location>
</feature>
<feature type="region of interest" description="Interaction with membrane phosphatidylinositol 4,5-bisphosphate and RNA" evidence="6">
    <location>
        <begin position="14"/>
        <end position="33"/>
    </location>
</feature>
<feature type="region of interest" description="Interaction with membrane phosphatidylinositol 4,5-bisphosphate" evidence="6">
    <location>
        <begin position="73"/>
        <end position="77"/>
    </location>
</feature>
<feature type="region of interest" description="Disordered" evidence="9">
    <location>
        <begin position="106"/>
        <end position="128"/>
    </location>
</feature>
<feature type="region of interest" description="Interaction with host PPIA/CYPA and NUP153" evidence="6">
    <location>
        <begin position="189"/>
        <end position="227"/>
    </location>
</feature>
<feature type="region of interest" description="PPIA/CYPA-binding loop" evidence="5">
    <location>
        <begin position="217"/>
        <end position="225"/>
    </location>
</feature>
<feature type="region of interest" description="Dimerization/Multimerization of capsid protein p24" evidence="5">
    <location>
        <begin position="277"/>
        <end position="363"/>
    </location>
</feature>
<feature type="region of interest" description="Disordered" evidence="9">
    <location>
        <begin position="438"/>
        <end position="482"/>
    </location>
</feature>
<feature type="short sequence motif" description="Nuclear export signal" evidence="1">
    <location>
        <begin position="16"/>
        <end position="22"/>
    </location>
</feature>
<feature type="short sequence motif" description="Nuclear localization signal" evidence="1">
    <location>
        <begin position="26"/>
        <end position="32"/>
    </location>
</feature>
<feature type="short sequence motif" description="PTAP/PSAP motif">
    <location>
        <begin position="455"/>
        <end position="458"/>
    </location>
</feature>
<feature type="short sequence motif" description="LYPX(n)L motif">
    <location>
        <begin position="483"/>
        <end position="492"/>
    </location>
</feature>
<feature type="site" description="Cleavage; by viral protease" evidence="1">
    <location>
        <begin position="132"/>
        <end position="133"/>
    </location>
</feature>
<feature type="site" description="Cleavage; by viral protease" evidence="1">
    <location>
        <begin position="363"/>
        <end position="364"/>
    </location>
</feature>
<feature type="site" description="Cleavage; by viral protease" evidence="1">
    <location>
        <begin position="377"/>
        <end position="378"/>
    </location>
</feature>
<feature type="site" description="Cleavage; by viral protease" evidence="1">
    <location>
        <begin position="432"/>
        <end position="433"/>
    </location>
</feature>
<feature type="site" description="Cleavage; by viral protease" evidence="1">
    <location>
        <begin position="448"/>
        <end position="449"/>
    </location>
</feature>
<feature type="modified residue" description="Phosphoserine; by host MAPK1" evidence="6">
    <location>
        <position position="148"/>
    </location>
</feature>
<feature type="modified residue" description="Asymmetric dimethylarginine; in Nucleocapsid protein p7; by host PRMT6" evidence="1">
    <location>
        <position position="387"/>
    </location>
</feature>
<feature type="modified residue" description="Asymmetric dimethylarginine; in Nucleocapsid protein p7; by host PRMT6" evidence="1">
    <location>
        <position position="409"/>
    </location>
</feature>
<feature type="lipid moiety-binding region" description="N-myristoyl glycine; by host" evidence="1">
    <location>
        <position position="2"/>
    </location>
</feature>
<feature type="strand" evidence="12">
    <location>
        <begin position="134"/>
        <end position="136"/>
    </location>
</feature>
<feature type="strand" evidence="12">
    <location>
        <begin position="142"/>
        <end position="144"/>
    </location>
</feature>
<feature type="helix" evidence="12">
    <location>
        <begin position="149"/>
        <end position="162"/>
    </location>
</feature>
<feature type="helix" evidence="12">
    <location>
        <begin position="168"/>
        <end position="175"/>
    </location>
</feature>
<feature type="turn" evidence="12">
    <location>
        <begin position="176"/>
        <end position="178"/>
    </location>
</feature>
<feature type="helix" evidence="12">
    <location>
        <begin position="181"/>
        <end position="189"/>
    </location>
</feature>
<feature type="helix" evidence="12">
    <location>
        <begin position="195"/>
        <end position="215"/>
    </location>
</feature>
<feature type="helix" evidence="12">
    <location>
        <begin position="233"/>
        <end position="236"/>
    </location>
</feature>
<feature type="helix" evidence="12">
    <location>
        <begin position="243"/>
        <end position="250"/>
    </location>
</feature>
<feature type="helix" evidence="12">
    <location>
        <begin position="258"/>
        <end position="277"/>
    </location>
</feature>
<feature type="turn" evidence="12">
    <location>
        <begin position="282"/>
        <end position="284"/>
    </location>
</feature>
<feature type="helix" evidence="12">
    <location>
        <begin position="293"/>
        <end position="306"/>
    </location>
</feature>
<feature type="helix" evidence="12">
    <location>
        <begin position="321"/>
        <end position="324"/>
    </location>
</feature>
<feature type="helix" evidence="12">
    <location>
        <begin position="328"/>
        <end position="337"/>
    </location>
</feature>
<feature type="helix" evidence="12">
    <location>
        <begin position="343"/>
        <end position="349"/>
    </location>
</feature>
<feature type="helix" evidence="11">
    <location>
        <begin position="486"/>
        <end position="490"/>
    </location>
</feature>
<gene>
    <name type="primary">gag</name>
</gene>
<protein>
    <recommendedName>
        <fullName>Gag polyprotein</fullName>
    </recommendedName>
    <alternativeName>
        <fullName>Pr55Gag</fullName>
    </alternativeName>
    <component>
        <recommendedName>
            <fullName>Matrix protein p17</fullName>
            <shortName>MA</shortName>
        </recommendedName>
    </component>
    <component>
        <recommendedName>
            <fullName>Capsid protein p24</fullName>
            <shortName>CA</shortName>
        </recommendedName>
    </component>
    <component>
        <recommendedName>
            <fullName evidence="6">Spacer peptide 1</fullName>
            <shortName>SP1</shortName>
        </recommendedName>
        <alternativeName>
            <fullName>p2</fullName>
        </alternativeName>
    </component>
    <component>
        <recommendedName>
            <fullName>Nucleocapsid protein p7</fullName>
            <shortName>NC</shortName>
        </recommendedName>
    </component>
    <component>
        <recommendedName>
            <fullName evidence="6">Spacer peptide 2</fullName>
            <shortName>SP2</shortName>
        </recommendedName>
        <alternativeName>
            <fullName>p1</fullName>
        </alternativeName>
    </component>
    <component>
        <recommendedName>
            <fullName>p6-gag</fullName>
        </recommendedName>
    </component>
</protein>
<comment type="function">
    <molecule>Gag polyprotein</molecule>
    <text evidence="5">Mediates, with Gag-Pol polyprotein, the essential events in virion assembly, including binding the plasma membrane, making the protein-protein interactions necessary to create spherical particles, recruiting the viral Env proteins, and packaging the genomic RNA via direct interactions with the RNA packaging sequence (Psi).</text>
</comment>
<comment type="function">
    <molecule>Matrix protein p17</molecule>
    <text evidence="1 6">Targets the polyprotein to the plasma membrane via a multipartite membrane-binding signal, that includes its myristoylated N-terminus (By similarity). Matrix protein is part of the pre-integration complex. Implicated in the release from host cell mediated by Vpu. Binds to RNA (By similarity).</text>
</comment>
<comment type="function">
    <molecule>Capsid protein p24</molecule>
    <text evidence="1 5 6">Forms the conical core that encapsulates the genomic RNA-nucleocapsid complex in the virion. Most core are conical, with only 7% tubular. The core is constituted by capsid protein hexamer subunits (By similarity). The capsid promotes immune invasion by cloaking viral DNA from CGAS detection (By similarity). Host restriction factors such as TRIM5-alpha or TRIMCyp bind retroviral capsids and cause premature capsid disassembly, leading to blocks in reverse transcription. Capsid restriction by TRIM5 is one of the factors which restricts HIV-1 to the human species. Host PIN1 apparently facilitates the virion uncoating (By similarity). On the other hand, interactions with PDZD8 or CYPA stabilize the capsid (By similarity).</text>
</comment>
<comment type="function">
    <molecule>Nucleocapsid protein p7</molecule>
    <text evidence="5">Encapsulates and protects viral dimeric unspliced genomic RNA (gRNA). Binds these RNAs through its zinc fingers. Acts as a nucleic acid chaperone which is involved in rearangement of nucleic acid secondary structure during gRNA retrotranscription. Also facilitates template switch leading to recombination. As part of the polyprotein, participates in gRNA dimerization, packaging, tRNA incorporation and virion assembly.</text>
</comment>
<comment type="function">
    <molecule>p6-gag</molecule>
    <text evidence="6">Plays a role in budding of the assembled particle by interacting with the host class E VPS proteins TSG101 and PDCD6IP/AIP1.</text>
</comment>
<comment type="subunit">
    <molecule>Gag polyprotein</molecule>
    <text evidence="4 5">Homotrimer; further assembles as hexamers of trimers. Oligomerization possibly creates a central hole into which the cytoplasmic tail of the gp41 envelope protein may be inserted. Interacts with host TRIM22; this interaction seems to disrupt proper trafficking of Gag polyprotein and may interfere with budding. Interacts with host PDZD8. When ubiquitinated, interacts (via p6-gag domain) with host PACSIN2; this interaction allows PACSIN2 recruitment to viral assembly sites and its subsequent incorporation into virions. Interacts with MOV10 (By similarity).</text>
</comment>
<comment type="subunit">
    <molecule>Matrix protein p17</molecule>
    <text evidence="5 6">Homotrimer; further assembles as hexamers of trimers. Interacts with gp41 (via C-terminus). Interacts with host CALM1; this interaction induces a conformational change in the Matrix protein, triggering exposure of the myristate group. Interacts with host AP3D1; this interaction allows the polyprotein trafficking to multivesicular bodies during virus assembly. Part of the pre-integration complex (PIC) which is composed of viral genome, matrix protein, Vpr and integrase.</text>
</comment>
<comment type="subunit">
    <molecule>Capsid protein p24</molecule>
    <text evidence="5 6">Homodimer; the homodimer further multimerizes as homohexamers or homopentamers (By similarity). Interacts with host NUP98 (By similarity). Interacts with host PPIA/CYPA; this interaction stabilizes the capsid (By similarity). Interacts with host NUP153 (By similarity). Interacts with host PDZD8; this interaction stabilizes the capsid. Interacts with host TRIM5; this interaction destabilizes the capsid (By similarity). Interacts with host CPSF6 (By similarity). Interacts with host NONO; the interaction is weak (By similarity).</text>
</comment>
<comment type="subunit">
    <molecule>Nucleocapsid protein p7</molecule>
    <text evidence="6">Interacts with host NUP98.</text>
</comment>
<comment type="subunit">
    <molecule>p6-gag</molecule>
    <text evidence="3 6">Interacts with Vpr; this interaction allows Vpr incorporation into the virion. Interacts with host TSG101. p6-gag interacts with host PDCD6IP/AIP1.</text>
</comment>
<comment type="subcellular location">
    <molecule>Gag polyprotein</molecule>
    <subcellularLocation>
        <location evidence="6">Host cell membrane</location>
        <topology evidence="6">Lipid-anchor</topology>
    </subcellularLocation>
    <subcellularLocation>
        <location evidence="6">Host endosome</location>
        <location evidence="6">Host multivesicular body</location>
    </subcellularLocation>
    <text evidence="6">These locations are probably linked to virus assembly sites. The main location is the cell membrane, but under some circumstances, late endosomal compartments can serve as productive sites for virion assembly.</text>
</comment>
<comment type="subcellular location">
    <molecule>Matrix protein p17</molecule>
    <subcellularLocation>
        <location evidence="6">Virion membrane</location>
        <topology evidence="6">Lipid-anchor</topology>
    </subcellularLocation>
    <subcellularLocation>
        <location evidence="1">Host nucleus</location>
    </subcellularLocation>
    <subcellularLocation>
        <location evidence="1">Host cytoplasm</location>
    </subcellularLocation>
</comment>
<comment type="subcellular location">
    <molecule>Capsid protein p24</molecule>
    <subcellularLocation>
        <location evidence="6">Virion</location>
    </subcellularLocation>
</comment>
<comment type="subcellular location">
    <molecule>Nucleocapsid protein p7</molecule>
    <subcellularLocation>
        <location evidence="6">Virion</location>
    </subcellularLocation>
</comment>
<comment type="alternative products">
    <event type="ribosomal frameshifting"/>
    <isoform>
        <id>P35962-1</id>
        <name>Gag polyprotein</name>
        <sequence type="displayed"/>
    </isoform>
    <isoform>
        <id>P35963-1</id>
        <name>Gag-Pol polyprotein</name>
        <sequence type="external"/>
    </isoform>
    <text>Translation results in the formation of the Gag polyprotein most of the time. Ribosomal frameshifting at the gag-pol genes boundary occurs at low frequency and produces the Gag-Pol polyprotein. This strategy of translation probably allows the virus to modulate the quantity of each viral protein. Maintenance of a correct Gag to Gag-Pol ratio is essential for RNA dimerization and viral infectivity.</text>
</comment>
<comment type="domain">
    <text evidence="6">Late-budding domains (L domains) are short sequence motifs essential for viral particle budding. They recruit proteins of the host ESCRT machinery (Endosomal Sorting Complex Required for Transport) or ESCRT-associated proteins. p6-gag contains two L domains: a PTAP/PSAP motif, which interacts with the UEV domain of TSG101 and a LYPX(n)L motif which interacts with PDCD6IP/AIP1.</text>
</comment>
<comment type="PTM">
    <text evidence="6">Gag-Pol polyprotein: Specific enzymatic cleavages by the viral protease yield mature proteins.</text>
</comment>
<comment type="PTM">
    <molecule>Matrix protein p17</molecule>
    <text evidence="5">Tyrosine phosphorylated presumably in the virion by a host kinase. Phosphorylation is apparently not a major regulator of membrane association.</text>
</comment>
<comment type="PTM">
    <text evidence="6">Capsid protein p24 is phosphorylated possibly by host MAPK1; this phosphorylation is necessary for Pin1-mediated virion uncoating.</text>
</comment>
<comment type="PTM">
    <text evidence="2">Nucleocapsid protein p7 is methylated by host PRMT6, impairing its function by reducing RNA annealing and the initiation of reverse transcription.</text>
</comment>
<comment type="miscellaneous">
    <text>HIV-1 lineages are divided in three main groups, M (for Major), O (for Outlier), and N (for New, or Non-M, Non-O). The vast majority of strains found worldwide belong to the group M. Group O seems to be endemic to and largely confined to Cameroon and neighboring countries in West Central Africa, where these viruses represent a small minority of HIV-1 strains. The group N is represented by a limited number of isolates from Cameroonian persons. The group M is further subdivided in 9 clades or subtypes (A to D, F to H, J and K).</text>
</comment>
<comment type="miscellaneous">
    <molecule>Isoform Gag polyprotein</molecule>
    <text>Produced by conventional translation.</text>
</comment>
<comment type="similarity">
    <text evidence="10">Belongs to the primate lentivirus group gag polyprotein family.</text>
</comment>
<name>GAG_HV1Y2</name>
<sequence>MGARASVLSAGELDKWEKIRLRPGGKKQYRLKHIVWASRELERFAVDPGLLETSEGCRQILGQLQPSLQTGSEELRSLYNTVATLYCVHQKIEVKDTKEALEKIEEEQNKSKKKAQQAAADTGNSSQVSQNYPIVQNLQGQMVHQAISPRTLNAWVKVVEEKAFSPEVIPMFSALSEGATPQDLNTMLNTVGGHQAAMQMLKETINEEAAEWDRLHPVHAGPIAPGQMREPRGSDIAGTTSTLQEQIGWMTNNPPIPVGEIYKRWIILGLNKIVRMYSPTSILDIRQGPKEPFRDYVDRFYKTLRAEQASQEVKNWMTETLLVQNANPDCKTILKALGPAATLEEMMTACQGVGGPGHKARVLAEAMSQVTNSATIMMQRGNFRNQRKTVKCFNCGKEGHIAKNCRAPRKKGCWKCGKEGHQMKDCTERQANFLGKIWPSHKGRPGNFLQSRPEPTAPSEESVRFGEETTTPSQKQEPIDKELYPLASLRSLFGSDPSSQ</sequence>
<reference key="1">
    <citation type="journal article" date="1992" name="J. Virol.">
        <title>Complete nucleotide sequence, genome organization, and biological properties of human immunodeficiency virus type 1 in vivo: evidence for limited defectiveness and complementation.</title>
        <authorList>
            <person name="Li Y."/>
            <person name="Hui H."/>
            <person name="Burgess C.J."/>
            <person name="Price R.W."/>
            <person name="Sharp P.M."/>
            <person name="Hahn B.H."/>
            <person name="Shaw G.M."/>
        </authorList>
    </citation>
    <scope>NUCLEOTIDE SEQUENCE [GENOMIC RNA]</scope>
</reference>
<reference key="2">
    <citation type="journal article" date="2003" name="Biochim. Biophys. Acta">
        <title>Role of HIV-1 Gag domains in viral assembly.</title>
        <authorList>
            <person name="Scarlata S."/>
            <person name="Carter C."/>
        </authorList>
    </citation>
    <scope>REVIEW</scope>
</reference>
<keyword id="KW-0002">3D-structure</keyword>
<keyword id="KW-0014">AIDS</keyword>
<keyword id="KW-0167">Capsid protein</keyword>
<keyword id="KW-1032">Host cell membrane</keyword>
<keyword id="KW-1035">Host cytoplasm</keyword>
<keyword id="KW-1039">Host endosome</keyword>
<keyword id="KW-1043">Host membrane</keyword>
<keyword id="KW-1048">Host nucleus</keyword>
<keyword id="KW-0945">Host-virus interaction</keyword>
<keyword id="KW-0449">Lipoprotein</keyword>
<keyword id="KW-0472">Membrane</keyword>
<keyword id="KW-0479">Metal-binding</keyword>
<keyword id="KW-0488">Methylation</keyword>
<keyword id="KW-0519">Myristate</keyword>
<keyword id="KW-0597">Phosphoprotein</keyword>
<keyword id="KW-0677">Repeat</keyword>
<keyword id="KW-0688">Ribosomal frameshifting</keyword>
<keyword id="KW-0694">RNA-binding</keyword>
<keyword id="KW-1198">Viral budding</keyword>
<keyword id="KW-1187">Viral budding via the host ESCRT complexes</keyword>
<keyword id="KW-0543">Viral nucleoprotein</keyword>
<keyword id="KW-1188">Viral release from host cell</keyword>
<keyword id="KW-0946">Virion</keyword>
<keyword id="KW-0862">Zinc</keyword>
<keyword id="KW-0863">Zinc-finger</keyword>
<proteinExistence type="evidence at protein level"/>
<accession>P35962</accession>
<dbReference type="EMBL" id="M93258">
    <property type="status" value="NOT_ANNOTATED_CDS"/>
    <property type="molecule type" value="Genomic_RNA"/>
</dbReference>
<dbReference type="PIR" id="A44001">
    <property type="entry name" value="A44001"/>
</dbReference>
<dbReference type="PDB" id="1F6U">
    <property type="method" value="NMR"/>
    <property type="chains" value="A=378-432"/>
</dbReference>
<dbReference type="PDB" id="1MFS">
    <property type="method" value="NMR"/>
    <property type="chains" value="A=379-432"/>
</dbReference>
<dbReference type="PDB" id="2R05">
    <property type="method" value="X-ray"/>
    <property type="resolution" value="2.55 A"/>
    <property type="chains" value="B=482-492"/>
</dbReference>
<dbReference type="PDB" id="8D3B">
    <property type="method" value="X-ray"/>
    <property type="resolution" value="3.30 A"/>
    <property type="chains" value="A/B/C/D/E/F=133-363"/>
</dbReference>
<dbReference type="PDBsum" id="1F6U"/>
<dbReference type="PDBsum" id="1MFS"/>
<dbReference type="PDBsum" id="2R05"/>
<dbReference type="PDBsum" id="8D3B"/>
<dbReference type="BMRB" id="P35962"/>
<dbReference type="SMR" id="P35962"/>
<dbReference type="EvolutionaryTrace" id="P35962"/>
<dbReference type="PRO" id="PR:P35962"/>
<dbReference type="Proteomes" id="UP000007419">
    <property type="component" value="Genome"/>
</dbReference>
<dbReference type="GO" id="GO:0042025">
    <property type="term" value="C:host cell nucleus"/>
    <property type="evidence" value="ECO:0007669"/>
    <property type="project" value="UniProtKB-SubCell"/>
</dbReference>
<dbReference type="GO" id="GO:0020002">
    <property type="term" value="C:host cell plasma membrane"/>
    <property type="evidence" value="ECO:0007669"/>
    <property type="project" value="UniProtKB-SubCell"/>
</dbReference>
<dbReference type="GO" id="GO:0072494">
    <property type="term" value="C:host multivesicular body"/>
    <property type="evidence" value="ECO:0007669"/>
    <property type="project" value="UniProtKB-SubCell"/>
</dbReference>
<dbReference type="GO" id="GO:0016020">
    <property type="term" value="C:membrane"/>
    <property type="evidence" value="ECO:0007669"/>
    <property type="project" value="UniProtKB-KW"/>
</dbReference>
<dbReference type="GO" id="GO:0019013">
    <property type="term" value="C:viral nucleocapsid"/>
    <property type="evidence" value="ECO:0007669"/>
    <property type="project" value="UniProtKB-KW"/>
</dbReference>
<dbReference type="GO" id="GO:0055036">
    <property type="term" value="C:virion membrane"/>
    <property type="evidence" value="ECO:0007669"/>
    <property type="project" value="UniProtKB-SubCell"/>
</dbReference>
<dbReference type="GO" id="GO:0003723">
    <property type="term" value="F:RNA binding"/>
    <property type="evidence" value="ECO:0007669"/>
    <property type="project" value="UniProtKB-KW"/>
</dbReference>
<dbReference type="GO" id="GO:0005198">
    <property type="term" value="F:structural molecule activity"/>
    <property type="evidence" value="ECO:0007669"/>
    <property type="project" value="InterPro"/>
</dbReference>
<dbReference type="GO" id="GO:0008270">
    <property type="term" value="F:zinc ion binding"/>
    <property type="evidence" value="ECO:0007669"/>
    <property type="project" value="UniProtKB-KW"/>
</dbReference>
<dbReference type="GO" id="GO:0039702">
    <property type="term" value="P:viral budding via host ESCRT complex"/>
    <property type="evidence" value="ECO:0007669"/>
    <property type="project" value="UniProtKB-KW"/>
</dbReference>
<dbReference type="GO" id="GO:0075523">
    <property type="term" value="P:viral translational frameshifting"/>
    <property type="evidence" value="ECO:0007669"/>
    <property type="project" value="UniProtKB-KW"/>
</dbReference>
<dbReference type="FunFam" id="1.10.1200.30:FF:000001">
    <property type="entry name" value="Gag polyprotein"/>
    <property type="match status" value="1"/>
</dbReference>
<dbReference type="FunFam" id="1.10.150.90:FF:000001">
    <property type="entry name" value="Gag polyprotein"/>
    <property type="match status" value="1"/>
</dbReference>
<dbReference type="FunFam" id="1.10.375.10:FF:000001">
    <property type="entry name" value="Gag polyprotein"/>
    <property type="match status" value="1"/>
</dbReference>
<dbReference type="FunFam" id="1.20.5.760:FF:000001">
    <property type="entry name" value="Gag polyprotein"/>
    <property type="match status" value="1"/>
</dbReference>
<dbReference type="FunFam" id="4.10.60.10:FF:000001">
    <property type="entry name" value="Gag polyprotein"/>
    <property type="match status" value="1"/>
</dbReference>
<dbReference type="Gene3D" id="1.10.1200.30">
    <property type="match status" value="1"/>
</dbReference>
<dbReference type="Gene3D" id="6.10.250.390">
    <property type="match status" value="1"/>
</dbReference>
<dbReference type="Gene3D" id="1.10.375.10">
    <property type="entry name" value="Human Immunodeficiency Virus Type 1 Capsid Protein"/>
    <property type="match status" value="1"/>
</dbReference>
<dbReference type="Gene3D" id="1.10.150.90">
    <property type="entry name" value="Immunodeficiency lentiviruses, gag gene matrix protein p17"/>
    <property type="match status" value="1"/>
</dbReference>
<dbReference type="Gene3D" id="1.20.5.760">
    <property type="entry name" value="Single helix bin"/>
    <property type="match status" value="1"/>
</dbReference>
<dbReference type="Gene3D" id="4.10.60.10">
    <property type="entry name" value="Zinc finger, CCHC-type"/>
    <property type="match status" value="1"/>
</dbReference>
<dbReference type="InterPro" id="IPR045345">
    <property type="entry name" value="Gag_p24_C"/>
</dbReference>
<dbReference type="InterPro" id="IPR014817">
    <property type="entry name" value="Gag_p6"/>
</dbReference>
<dbReference type="InterPro" id="IPR000071">
    <property type="entry name" value="Lentvrl_matrix_N"/>
</dbReference>
<dbReference type="InterPro" id="IPR012344">
    <property type="entry name" value="Matrix_HIV/RSV_N"/>
</dbReference>
<dbReference type="InterPro" id="IPR050195">
    <property type="entry name" value="Primate_lentivir_Gag_pol-like"/>
</dbReference>
<dbReference type="InterPro" id="IPR008916">
    <property type="entry name" value="Retrov_capsid_C"/>
</dbReference>
<dbReference type="InterPro" id="IPR008919">
    <property type="entry name" value="Retrov_capsid_N"/>
</dbReference>
<dbReference type="InterPro" id="IPR010999">
    <property type="entry name" value="Retrovr_matrix"/>
</dbReference>
<dbReference type="InterPro" id="IPR001878">
    <property type="entry name" value="Znf_CCHC"/>
</dbReference>
<dbReference type="InterPro" id="IPR036875">
    <property type="entry name" value="Znf_CCHC_sf"/>
</dbReference>
<dbReference type="PANTHER" id="PTHR40389:SF4">
    <property type="match status" value="1"/>
</dbReference>
<dbReference type="PANTHER" id="PTHR40389">
    <property type="entry name" value="ENDOGENOUS RETROVIRUS GROUP K MEMBER 24 GAG POLYPROTEIN-RELATED"/>
    <property type="match status" value="1"/>
</dbReference>
<dbReference type="Pfam" id="PF00540">
    <property type="entry name" value="Gag_p17"/>
    <property type="match status" value="1"/>
</dbReference>
<dbReference type="Pfam" id="PF00607">
    <property type="entry name" value="Gag_p24"/>
    <property type="match status" value="1"/>
</dbReference>
<dbReference type="Pfam" id="PF19317">
    <property type="entry name" value="Gag_p24_C"/>
    <property type="match status" value="1"/>
</dbReference>
<dbReference type="Pfam" id="PF08705">
    <property type="entry name" value="Gag_p6"/>
    <property type="match status" value="1"/>
</dbReference>
<dbReference type="Pfam" id="PF00098">
    <property type="entry name" value="zf-CCHC"/>
    <property type="match status" value="2"/>
</dbReference>
<dbReference type="PRINTS" id="PR00234">
    <property type="entry name" value="HIV1MATRIX"/>
</dbReference>
<dbReference type="SMART" id="SM00343">
    <property type="entry name" value="ZnF_C2HC"/>
    <property type="match status" value="2"/>
</dbReference>
<dbReference type="SUPFAM" id="SSF47836">
    <property type="entry name" value="Retroviral matrix proteins"/>
    <property type="match status" value="1"/>
</dbReference>
<dbReference type="SUPFAM" id="SSF47353">
    <property type="entry name" value="Retrovirus capsid dimerization domain-like"/>
    <property type="match status" value="1"/>
</dbReference>
<dbReference type="SUPFAM" id="SSF47943">
    <property type="entry name" value="Retrovirus capsid protein, N-terminal core domain"/>
    <property type="match status" value="1"/>
</dbReference>
<dbReference type="SUPFAM" id="SSF57756">
    <property type="entry name" value="Retrovirus zinc finger-like domains"/>
    <property type="match status" value="1"/>
</dbReference>
<dbReference type="PROSITE" id="PS50158">
    <property type="entry name" value="ZF_CCHC"/>
    <property type="match status" value="2"/>
</dbReference>